<feature type="chain" id="PRO_0000073454" description="Spectrin alpha chain, non-erythrocytic 1">
    <location>
        <begin position="1"/>
        <end position="2477"/>
    </location>
</feature>
<feature type="repeat" description="Spectrin 1" evidence="2">
    <location>
        <begin position="45"/>
        <end position="146"/>
    </location>
</feature>
<feature type="repeat" description="Spectrin 2" evidence="2">
    <location>
        <begin position="150"/>
        <end position="251"/>
    </location>
</feature>
<feature type="repeat" description="Spectrin 3" evidence="2">
    <location>
        <begin position="256"/>
        <end position="358"/>
    </location>
</feature>
<feature type="repeat" description="Spectrin 4" evidence="2">
    <location>
        <begin position="361"/>
        <end position="465"/>
    </location>
</feature>
<feature type="repeat" description="Spectrin 5" evidence="2">
    <location>
        <begin position="468"/>
        <end position="570"/>
    </location>
</feature>
<feature type="repeat" description="Spectrin 6" evidence="2">
    <location>
        <begin position="574"/>
        <end position="676"/>
    </location>
</feature>
<feature type="repeat" description="Spectrin 7" evidence="2">
    <location>
        <begin position="679"/>
        <end position="781"/>
    </location>
</feature>
<feature type="repeat" description="Spectrin 8" evidence="2">
    <location>
        <begin position="785"/>
        <end position="888"/>
    </location>
</feature>
<feature type="repeat" description="Spectrin 9" evidence="2">
    <location>
        <begin position="891"/>
        <end position="969"/>
    </location>
</feature>
<feature type="domain" description="SH3" evidence="3">
    <location>
        <begin position="967"/>
        <end position="1026"/>
    </location>
</feature>
<feature type="repeat" description="Spectrin 10" evidence="2">
    <location>
        <begin position="1096"/>
        <end position="1162"/>
    </location>
</feature>
<feature type="repeat" description="Spectrin 11" evidence="2">
    <location>
        <begin position="1234"/>
        <end position="1336"/>
    </location>
</feature>
<feature type="repeat" description="Spectrin 12" evidence="2">
    <location>
        <begin position="1339"/>
        <end position="1442"/>
    </location>
</feature>
<feature type="repeat" description="Spectrin 13" evidence="2">
    <location>
        <begin position="1446"/>
        <end position="1549"/>
    </location>
</feature>
<feature type="repeat" description="Spectrin 14" evidence="2">
    <location>
        <begin position="1552"/>
        <end position="1661"/>
    </location>
</feature>
<feature type="repeat" description="Spectrin 15" evidence="2 6">
    <location>
        <begin position="1664"/>
        <end position="1767"/>
    </location>
</feature>
<feature type="repeat" description="Spectrin 16" evidence="2 6 7 8">
    <location>
        <begin position="1769"/>
        <end position="1873"/>
    </location>
</feature>
<feature type="repeat" description="Spectrin 17" evidence="2">
    <location>
        <begin position="1876"/>
        <end position="1979"/>
    </location>
</feature>
<feature type="repeat" description="Spectrin 18" evidence="2">
    <location>
        <begin position="1983"/>
        <end position="2086"/>
    </location>
</feature>
<feature type="repeat" description="Spectrin 19" evidence="2">
    <location>
        <begin position="2097"/>
        <end position="2199"/>
    </location>
</feature>
<feature type="repeat" description="Spectrin 20" evidence="2">
    <location>
        <begin position="2211"/>
        <end position="2315"/>
    </location>
</feature>
<feature type="domain" description="EF-hand 1" evidence="4">
    <location>
        <begin position="2328"/>
        <end position="2363"/>
    </location>
</feature>
<feature type="domain" description="EF-hand 2" evidence="4">
    <location>
        <begin position="2371"/>
        <end position="2406"/>
    </location>
</feature>
<feature type="domain" description="EF-hand 3" evidence="4">
    <location>
        <begin position="2409"/>
        <end position="2444"/>
    </location>
</feature>
<feature type="region of interest" description="N-terminal domain">
    <location>
        <begin position="1"/>
        <end position="14"/>
    </location>
</feature>
<feature type="region of interest" description="C-terminal domain">
    <location>
        <begin position="2257"/>
        <end position="2477"/>
    </location>
</feature>
<feature type="binding site" evidence="4">
    <location>
        <position position="2341"/>
    </location>
    <ligand>
        <name>Ca(2+)</name>
        <dbReference type="ChEBI" id="CHEBI:29108"/>
        <label>1</label>
    </ligand>
</feature>
<feature type="binding site" evidence="4">
    <location>
        <position position="2343"/>
    </location>
    <ligand>
        <name>Ca(2+)</name>
        <dbReference type="ChEBI" id="CHEBI:29108"/>
        <label>1</label>
    </ligand>
</feature>
<feature type="binding site" evidence="4">
    <location>
        <position position="2345"/>
    </location>
    <ligand>
        <name>Ca(2+)</name>
        <dbReference type="ChEBI" id="CHEBI:29108"/>
        <label>1</label>
    </ligand>
</feature>
<feature type="binding site" evidence="4">
    <location>
        <position position="2347"/>
    </location>
    <ligand>
        <name>Ca(2+)</name>
        <dbReference type="ChEBI" id="CHEBI:29108"/>
        <label>1</label>
    </ligand>
</feature>
<feature type="binding site" evidence="4">
    <location>
        <position position="2352"/>
    </location>
    <ligand>
        <name>Ca(2+)</name>
        <dbReference type="ChEBI" id="CHEBI:29108"/>
        <label>1</label>
    </ligand>
</feature>
<feature type="binding site" evidence="4">
    <location>
        <position position="2384"/>
    </location>
    <ligand>
        <name>Ca(2+)</name>
        <dbReference type="ChEBI" id="CHEBI:29108"/>
        <label>2</label>
    </ligand>
</feature>
<feature type="binding site" evidence="4">
    <location>
        <position position="2386"/>
    </location>
    <ligand>
        <name>Ca(2+)</name>
        <dbReference type="ChEBI" id="CHEBI:29108"/>
        <label>2</label>
    </ligand>
</feature>
<feature type="binding site" evidence="4">
    <location>
        <position position="2388"/>
    </location>
    <ligand>
        <name>Ca(2+)</name>
        <dbReference type="ChEBI" id="CHEBI:29108"/>
        <label>2</label>
    </ligand>
</feature>
<feature type="binding site" evidence="4">
    <location>
        <position position="2390"/>
    </location>
    <ligand>
        <name>Ca(2+)</name>
        <dbReference type="ChEBI" id="CHEBI:29108"/>
        <label>2</label>
    </ligand>
</feature>
<feature type="binding site" evidence="4">
    <location>
        <position position="2395"/>
    </location>
    <ligand>
        <name>Ca(2+)</name>
        <dbReference type="ChEBI" id="CHEBI:29108"/>
        <label>2</label>
    </ligand>
</feature>
<feature type="site" description="Cleavage; by mu-calpain" evidence="1">
    <location>
        <begin position="1176"/>
        <end position="1177"/>
    </location>
</feature>
<feature type="modified residue" description="Phosphotyrosine" evidence="1">
    <location>
        <position position="1176"/>
    </location>
</feature>
<feature type="strand" evidence="22">
    <location>
        <begin position="952"/>
        <end position="956"/>
    </location>
</feature>
<feature type="helix" evidence="22">
    <location>
        <begin position="957"/>
        <end position="959"/>
    </location>
</feature>
<feature type="strand" evidence="19">
    <location>
        <begin position="960"/>
        <end position="962"/>
    </location>
</feature>
<feature type="strand" evidence="19">
    <location>
        <begin position="967"/>
        <end position="969"/>
    </location>
</feature>
<feature type="strand" evidence="24">
    <location>
        <begin position="971"/>
        <end position="974"/>
    </location>
</feature>
<feature type="strand" evidence="20">
    <location>
        <begin position="981"/>
        <end position="984"/>
    </location>
</feature>
<feature type="strand" evidence="24">
    <location>
        <begin position="993"/>
        <end position="998"/>
    </location>
</feature>
<feature type="strand" evidence="24">
    <location>
        <begin position="1001"/>
        <end position="1009"/>
    </location>
</feature>
<feature type="strand" evidence="24">
    <location>
        <begin position="1012"/>
        <end position="1017"/>
    </location>
</feature>
<feature type="helix" evidence="24">
    <location>
        <begin position="1018"/>
        <end position="1020"/>
    </location>
</feature>
<feature type="strand" evidence="24">
    <location>
        <begin position="1021"/>
        <end position="1023"/>
    </location>
</feature>
<feature type="strand" evidence="21">
    <location>
        <begin position="1034"/>
        <end position="1036"/>
    </location>
</feature>
<feature type="helix" evidence="23">
    <location>
        <begin position="1664"/>
        <end position="1686"/>
    </location>
</feature>
<feature type="helix" evidence="23">
    <location>
        <begin position="1695"/>
        <end position="1730"/>
    </location>
</feature>
<feature type="strand" evidence="23">
    <location>
        <begin position="1733"/>
        <end position="1735"/>
    </location>
</feature>
<feature type="helix" evidence="18">
    <location>
        <begin position="1771"/>
        <end position="1791"/>
    </location>
</feature>
<feature type="helix" evidence="18">
    <location>
        <begin position="1801"/>
        <end position="1837"/>
    </location>
</feature>
<feature type="helix" evidence="18">
    <location>
        <begin position="1843"/>
        <end position="1898"/>
    </location>
</feature>
<feature type="helix" evidence="18">
    <location>
        <begin position="1907"/>
        <end position="1944"/>
    </location>
</feature>
<feature type="helix" evidence="18">
    <location>
        <begin position="1949"/>
        <end position="1981"/>
    </location>
</feature>
<name>SPTN1_CHICK</name>
<proteinExistence type="evidence at protein level"/>
<reference key="1">
    <citation type="journal article" date="1989" name="J. Cell Biol.">
        <title>Primary structure of the brain alpha-spectrin.</title>
        <authorList>
            <person name="Wasenius V.-M."/>
            <person name="Saraste M."/>
            <person name="Salven P."/>
            <person name="Eraemaa M."/>
            <person name="Holm L."/>
            <person name="Lehto V.-P."/>
        </authorList>
    </citation>
    <scope>NUCLEOTIDE SEQUENCE [GENOMIC DNA / MRNA]</scope>
</reference>
<reference key="2">
    <citation type="journal article" date="1989" name="J. Cell Biol.">
        <authorList>
            <person name="Wasenius V.-M."/>
            <person name="Saraste M."/>
            <person name="Salven P."/>
            <person name="Eraemaa M."/>
            <person name="Holm L."/>
            <person name="Lehto V.-P."/>
        </authorList>
    </citation>
    <scope>ERRATUM OF PUBMED:2910879</scope>
    <scope>SEQUENCE REVISION</scope>
</reference>
<reference key="3">
    <citation type="journal article" date="1985" name="EMBO J.">
        <title>Sequencing of the chicken non-erythroid spectrin cDNA reveals an internal repetitive structure homologous to the human erythrocyte spectrin.</title>
        <authorList>
            <person name="Wasenius V.-M."/>
            <person name="Saraste M."/>
            <person name="Knowles J."/>
            <person name="Virtanen I."/>
            <person name="Lehto V.-P."/>
        </authorList>
    </citation>
    <scope>NUCLEOTIDE SEQUENCE [MRNA] OF 1695-2153</scope>
</reference>
<reference key="4">
    <citation type="journal article" date="1992" name="Nature">
        <title>Crystal structure of a Src-homology 3 (SH3) domain.</title>
        <authorList>
            <person name="Musacchio A."/>
            <person name="Noble M."/>
            <person name="Pauptit R."/>
            <person name="Wierenga R.K."/>
            <person name="Saraste M."/>
        </authorList>
    </citation>
    <scope>X-RAY CRYSTALLOGRAPHY (1.8 ANGSTROMS) OF 965-1025</scope>
</reference>
<reference key="5">
    <citation type="journal article" date="1995" name="EMBO J.">
        <title>Molecular mechanism of the calcium-induced conformational change in the spectrin EF-hands.</title>
        <authorList>
            <person name="Trave G."/>
            <person name="Lacombe J.-P."/>
            <person name="Pfuhl M."/>
            <person name="Saraste M."/>
            <person name="Pastore A."/>
        </authorList>
    </citation>
    <scope>STRUCTURE BY NMR OF 2320-2403</scope>
</reference>
<reference key="6">
    <citation type="journal article" date="1997" name="J. Mol. Biol.">
        <title>Solution structure of the spectrin repeat: a left-handed antiparallel triple-helical coiled-coil.</title>
        <authorList>
            <person name="Pascual J."/>
            <person name="Pfuhl M."/>
            <person name="Walther D."/>
            <person name="Saraste M."/>
            <person name="Nilges M."/>
        </authorList>
    </citation>
    <scope>STRUCTURE BY NMR OF 1763-1872</scope>
</reference>
<reference key="7">
    <citation type="journal article" date="1998" name="Nat. Struct. Biol.">
        <title>Obligatory steps in protein folding and the conformational diversity of the transition state.</title>
        <authorList>
            <person name="Martinez J.C."/>
            <person name="Pisabarro M.T."/>
            <person name="Serrano L."/>
        </authorList>
    </citation>
    <scope>X-RAY CRYSTALLOGRAPHY (2.0 ANGSTROMS) OF 969-1025</scope>
</reference>
<reference evidence="9 10" key="8">
    <citation type="journal article" date="2004" name="J. Mol. Biol.">
        <title>Independent movement, dimerization and stability of tandem repeats of chicken brain alpha-spectrin.</title>
        <authorList>
            <person name="Kusunoki H."/>
            <person name="Minasov G."/>
            <person name="Macdonald R.I."/>
            <person name="Mondragon A."/>
        </authorList>
    </citation>
    <scope>X-RAY CRYSTALLOGRAPHY (2.00 ANGSTROMS) OF 1662-1876</scope>
</reference>
<reference evidence="11 12 13 14 15 16" key="9">
    <citation type="journal article" date="2011" name="Acta Crystallogr. D">
        <title>Understanding the polymorphic behaviour of a mutant of the alpha-spectrin SH3 domain by means of two 1.1 Aa resolution structures.</title>
        <authorList>
            <person name="Camara-Artigas A."/>
            <person name="Gavira J.A."/>
            <person name="Casares S."/>
            <person name="Garcia-Ruiz J.M."/>
            <person name="Conejero-Lara F."/>
            <person name="Allen J.P."/>
            <person name="Martinez J.C."/>
        </authorList>
    </citation>
    <scope>X-RAY CRYSTALLOGRAPHY (1.10 ANGSTROMS) OF 965-1025</scope>
</reference>
<reference evidence="17" key="10">
    <citation type="journal article" date="2017" name="Nat. Struct. Mol. Biol.">
        <title>Cotranslational folding of spectrin domains via partially structured states.</title>
        <authorList>
            <person name="Nilsson O.B."/>
            <person name="Nickson A.A."/>
            <person name="Hollins J.J."/>
            <person name="Wickles S."/>
            <person name="Steward A."/>
            <person name="Beckmann R."/>
            <person name="von Heijne G."/>
            <person name="Clarke J."/>
        </authorList>
    </citation>
    <scope>STRUCTURE BY ELECTRON MICROSCOPY (4.80 ANGSTROMS) OF 1763-1872</scope>
</reference>
<keyword id="KW-0002">3D-structure</keyword>
<keyword id="KW-0117">Actin capping</keyword>
<keyword id="KW-0009">Actin-binding</keyword>
<keyword id="KW-0106">Calcium</keyword>
<keyword id="KW-0112">Calmodulin-binding</keyword>
<keyword id="KW-0963">Cytoplasm</keyword>
<keyword id="KW-0206">Cytoskeleton</keyword>
<keyword id="KW-0479">Metal-binding</keyword>
<keyword id="KW-0597">Phosphoprotein</keyword>
<keyword id="KW-1185">Reference proteome</keyword>
<keyword id="KW-0677">Repeat</keyword>
<keyword id="KW-0728">SH3 domain</keyword>
<organism>
    <name type="scientific">Gallus gallus</name>
    <name type="common">Chicken</name>
    <dbReference type="NCBI Taxonomy" id="9031"/>
    <lineage>
        <taxon>Eukaryota</taxon>
        <taxon>Metazoa</taxon>
        <taxon>Chordata</taxon>
        <taxon>Craniata</taxon>
        <taxon>Vertebrata</taxon>
        <taxon>Euteleostomi</taxon>
        <taxon>Archelosauria</taxon>
        <taxon>Archosauria</taxon>
        <taxon>Dinosauria</taxon>
        <taxon>Saurischia</taxon>
        <taxon>Theropoda</taxon>
        <taxon>Coelurosauria</taxon>
        <taxon>Aves</taxon>
        <taxon>Neognathae</taxon>
        <taxon>Galloanserae</taxon>
        <taxon>Galliformes</taxon>
        <taxon>Phasianidae</taxon>
        <taxon>Phasianinae</taxon>
        <taxon>Gallus</taxon>
    </lineage>
</organism>
<accession>P07751</accession>
<gene>
    <name type="primary">SPTAN1</name>
    <name type="synonym">SPTA2</name>
</gene>
<dbReference type="EMBL" id="X14518">
    <property type="protein sequence ID" value="CAA32662.1"/>
    <property type="molecule type" value="Genomic_DNA"/>
</dbReference>
<dbReference type="EMBL" id="X14519">
    <property type="protein sequence ID" value="CAA32663.1"/>
    <property type="status" value="ALT_SEQ"/>
    <property type="molecule type" value="mRNA"/>
</dbReference>
<dbReference type="EMBL" id="X02593">
    <property type="protein sequence ID" value="CAB51571.1"/>
    <property type="status" value="ALT_SEQ"/>
    <property type="molecule type" value="mRNA"/>
</dbReference>
<dbReference type="PIR" id="A30122">
    <property type="entry name" value="SJCHA"/>
</dbReference>
<dbReference type="RefSeq" id="NP_001036003.1">
    <property type="nucleotide sequence ID" value="NM_001042538.1"/>
</dbReference>
<dbReference type="PDB" id="1AEY">
    <property type="method" value="NMR"/>
    <property type="chains" value="A=965-1025"/>
</dbReference>
<dbReference type="PDB" id="1AJ3">
    <property type="method" value="NMR"/>
    <property type="chains" value="A=1763-1872"/>
</dbReference>
<dbReference type="PDB" id="1BK2">
    <property type="method" value="X-ray"/>
    <property type="resolution" value="2.01 A"/>
    <property type="chains" value="A=969-1025"/>
</dbReference>
<dbReference type="PDB" id="1CUN">
    <property type="method" value="X-ray"/>
    <property type="resolution" value="2.00 A"/>
    <property type="chains" value="A/B/C=1770-1982"/>
</dbReference>
<dbReference type="PDB" id="1E6G">
    <property type="method" value="X-ray"/>
    <property type="resolution" value="2.30 A"/>
    <property type="chains" value="A=965-1025"/>
</dbReference>
<dbReference type="PDB" id="1E6H">
    <property type="method" value="X-ray"/>
    <property type="resolution" value="2.01 A"/>
    <property type="chains" value="A=965-1025"/>
</dbReference>
<dbReference type="PDB" id="1E7O">
    <property type="method" value="X-ray"/>
    <property type="resolution" value="3.20 A"/>
    <property type="chains" value="A=965-1025"/>
</dbReference>
<dbReference type="PDB" id="1G2B">
    <property type="method" value="X-ray"/>
    <property type="resolution" value="1.12 A"/>
    <property type="chains" value="A=967-1025"/>
</dbReference>
<dbReference type="PDB" id="1H8K">
    <property type="method" value="X-ray"/>
    <property type="resolution" value="2.70 A"/>
    <property type="chains" value="A=965-1025"/>
</dbReference>
<dbReference type="PDB" id="1HD3">
    <property type="method" value="X-ray"/>
    <property type="resolution" value="1.98 A"/>
    <property type="chains" value="A=965-1025"/>
</dbReference>
<dbReference type="PDB" id="1M8M">
    <property type="method" value="NMR"/>
    <property type="chains" value="A=965-1025"/>
</dbReference>
<dbReference type="PDB" id="1NEG">
    <property type="method" value="X-ray"/>
    <property type="resolution" value="2.30 A"/>
    <property type="chains" value="A=965-1024"/>
</dbReference>
<dbReference type="PDB" id="1PWT">
    <property type="method" value="X-ray"/>
    <property type="resolution" value="1.77 A"/>
    <property type="chains" value="A=967-1025"/>
</dbReference>
<dbReference type="PDB" id="1QKW">
    <property type="method" value="X-ray"/>
    <property type="resolution" value="2.00 A"/>
    <property type="chains" value="A=964-1025"/>
</dbReference>
<dbReference type="PDB" id="1QKX">
    <property type="method" value="X-ray"/>
    <property type="resolution" value="1.80 A"/>
    <property type="chains" value="A=964-1025"/>
</dbReference>
<dbReference type="PDB" id="1SHG">
    <property type="method" value="X-ray"/>
    <property type="resolution" value="1.80 A"/>
    <property type="chains" value="A=965-1025"/>
</dbReference>
<dbReference type="PDB" id="1TUC">
    <property type="method" value="X-ray"/>
    <property type="resolution" value="2.02 A"/>
    <property type="chains" value="A=983-1026, A=1030-1090"/>
</dbReference>
<dbReference type="PDB" id="1TUD">
    <property type="method" value="X-ray"/>
    <property type="resolution" value="1.77 A"/>
    <property type="chains" value="A=964-1010"/>
</dbReference>
<dbReference type="PDB" id="1U06">
    <property type="method" value="X-ray"/>
    <property type="resolution" value="1.49 A"/>
    <property type="chains" value="A=965-1025"/>
</dbReference>
<dbReference type="PDB" id="1U4Q">
    <property type="method" value="X-ray"/>
    <property type="resolution" value="2.50 A"/>
    <property type="chains" value="A/B=1662-1982"/>
</dbReference>
<dbReference type="PDB" id="1U5P">
    <property type="method" value="X-ray"/>
    <property type="resolution" value="2.00 A"/>
    <property type="chains" value="A=1662-1876"/>
</dbReference>
<dbReference type="PDB" id="1UUE">
    <property type="method" value="X-ray"/>
    <property type="resolution" value="2.60 A"/>
    <property type="chains" value="A=965-1025"/>
</dbReference>
<dbReference type="PDB" id="2CDT">
    <property type="method" value="X-ray"/>
    <property type="resolution" value="2.54 A"/>
    <property type="chains" value="A=965-1025"/>
</dbReference>
<dbReference type="PDB" id="2F2V">
    <property type="method" value="X-ray"/>
    <property type="resolution" value="1.85 A"/>
    <property type="chains" value="A=965-1025"/>
</dbReference>
<dbReference type="PDB" id="2F2W">
    <property type="method" value="X-ray"/>
    <property type="resolution" value="1.70 A"/>
    <property type="chains" value="A=965-1025"/>
</dbReference>
<dbReference type="PDB" id="2F2X">
    <property type="method" value="X-ray"/>
    <property type="resolution" value="1.60 A"/>
    <property type="chains" value="A=965-1025"/>
</dbReference>
<dbReference type="PDB" id="2JM8">
    <property type="method" value="NMR"/>
    <property type="chains" value="A=965-1025"/>
</dbReference>
<dbReference type="PDB" id="2JM9">
    <property type="method" value="NMR"/>
    <property type="chains" value="A=965-1025"/>
</dbReference>
<dbReference type="PDB" id="2JMA">
    <property type="method" value="NMR"/>
    <property type="chains" value="A=965-1025"/>
</dbReference>
<dbReference type="PDB" id="2JMC">
    <property type="method" value="NMR"/>
    <property type="chains" value="A=983-1025"/>
</dbReference>
<dbReference type="PDB" id="2KR3">
    <property type="method" value="NMR"/>
    <property type="chains" value="A=965-1025"/>
</dbReference>
<dbReference type="PDB" id="2KXD">
    <property type="method" value="NMR"/>
    <property type="chains" value="A=967-1025"/>
</dbReference>
<dbReference type="PDB" id="2LJ3">
    <property type="method" value="NMR"/>
    <property type="chains" value="A=965-1025"/>
</dbReference>
<dbReference type="PDB" id="2NUZ">
    <property type="method" value="X-ray"/>
    <property type="resolution" value="1.85 A"/>
    <property type="chains" value="A=965-1025"/>
</dbReference>
<dbReference type="PDB" id="2OAW">
    <property type="method" value="X-ray"/>
    <property type="resolution" value="1.90 A"/>
    <property type="chains" value="A/B/C/D=969-1025"/>
</dbReference>
<dbReference type="PDB" id="2RMO">
    <property type="method" value="NMR"/>
    <property type="chains" value="A=965-1025"/>
</dbReference>
<dbReference type="PDB" id="2ROT">
    <property type="method" value="NMR"/>
    <property type="chains" value="A=965-1025"/>
</dbReference>
<dbReference type="PDB" id="3I9Q">
    <property type="method" value="X-ray"/>
    <property type="resolution" value="1.45 A"/>
    <property type="chains" value="A=969-1025"/>
</dbReference>
<dbReference type="PDB" id="3M0P">
    <property type="method" value="X-ray"/>
    <property type="resolution" value="2.60 A"/>
    <property type="chains" value="A=965-1025"/>
</dbReference>
<dbReference type="PDB" id="3M0Q">
    <property type="method" value="X-ray"/>
    <property type="resolution" value="1.75 A"/>
    <property type="chains" value="A=965-1025"/>
</dbReference>
<dbReference type="PDB" id="3M0R">
    <property type="method" value="X-ray"/>
    <property type="resolution" value="1.10 A"/>
    <property type="chains" value="A=965-1025"/>
</dbReference>
<dbReference type="PDB" id="3M0S">
    <property type="method" value="X-ray"/>
    <property type="resolution" value="1.60 A"/>
    <property type="chains" value="A=969-1025"/>
</dbReference>
<dbReference type="PDB" id="3M0T">
    <property type="method" value="X-ray"/>
    <property type="resolution" value="1.70 A"/>
    <property type="chains" value="A=965-1025"/>
</dbReference>
<dbReference type="PDB" id="3M0U">
    <property type="method" value="X-ray"/>
    <property type="resolution" value="1.10 A"/>
    <property type="chains" value="A=965-1025"/>
</dbReference>
<dbReference type="PDB" id="3NGP">
    <property type="method" value="X-ray"/>
    <property type="resolution" value="1.08 A"/>
    <property type="chains" value="A=965-1025"/>
</dbReference>
<dbReference type="PDB" id="4F16">
    <property type="method" value="X-ray"/>
    <property type="resolution" value="1.93 A"/>
    <property type="chains" value="A=965-1025"/>
</dbReference>
<dbReference type="PDB" id="4F17">
    <property type="method" value="X-ray"/>
    <property type="resolution" value="1.55 A"/>
    <property type="chains" value="A=965-1025"/>
</dbReference>
<dbReference type="PDB" id="5IHI">
    <property type="method" value="X-ray"/>
    <property type="resolution" value="1.45 A"/>
    <property type="chains" value="A=965-1025"/>
</dbReference>
<dbReference type="PDB" id="5IHK">
    <property type="method" value="X-ray"/>
    <property type="resolution" value="1.35 A"/>
    <property type="chains" value="A=965-1025"/>
</dbReference>
<dbReference type="PDB" id="5IHN">
    <property type="method" value="X-ray"/>
    <property type="resolution" value="1.50 A"/>
    <property type="chains" value="A=965-1025"/>
</dbReference>
<dbReference type="PDB" id="5M6S">
    <property type="method" value="EM"/>
    <property type="resolution" value="4.80 A"/>
    <property type="chains" value="A=1764-1872"/>
</dbReference>
<dbReference type="PDB" id="7S4R">
    <property type="method" value="X-ray"/>
    <property type="resolution" value="2.10 A"/>
    <property type="chains" value="A=970-1025"/>
</dbReference>
<dbReference type="PDB" id="8CF4">
    <property type="method" value="NMR"/>
    <property type="chains" value="A=965-1025"/>
</dbReference>
<dbReference type="PDB" id="8CHG">
    <property type="method" value="NMR"/>
    <property type="chains" value="A=965-1025"/>
</dbReference>
<dbReference type="PDB" id="8CHH">
    <property type="method" value="NMR"/>
    <property type="chains" value="A=965-1025"/>
</dbReference>
<dbReference type="PDBsum" id="1AEY"/>
<dbReference type="PDBsum" id="1AJ3"/>
<dbReference type="PDBsum" id="1BK2"/>
<dbReference type="PDBsum" id="1CUN"/>
<dbReference type="PDBsum" id="1E6G"/>
<dbReference type="PDBsum" id="1E6H"/>
<dbReference type="PDBsum" id="1E7O"/>
<dbReference type="PDBsum" id="1G2B"/>
<dbReference type="PDBsum" id="1H8K"/>
<dbReference type="PDBsum" id="1HD3"/>
<dbReference type="PDBsum" id="1M8M"/>
<dbReference type="PDBsum" id="1NEG"/>
<dbReference type="PDBsum" id="1PWT"/>
<dbReference type="PDBsum" id="1QKW"/>
<dbReference type="PDBsum" id="1QKX"/>
<dbReference type="PDBsum" id="1SHG"/>
<dbReference type="PDBsum" id="1TUC"/>
<dbReference type="PDBsum" id="1TUD"/>
<dbReference type="PDBsum" id="1U06"/>
<dbReference type="PDBsum" id="1U4Q"/>
<dbReference type="PDBsum" id="1U5P"/>
<dbReference type="PDBsum" id="1UUE"/>
<dbReference type="PDBsum" id="2CDT"/>
<dbReference type="PDBsum" id="2F2V"/>
<dbReference type="PDBsum" id="2F2W"/>
<dbReference type="PDBsum" id="2F2X"/>
<dbReference type="PDBsum" id="2JM8"/>
<dbReference type="PDBsum" id="2JM9"/>
<dbReference type="PDBsum" id="2JMA"/>
<dbReference type="PDBsum" id="2JMC"/>
<dbReference type="PDBsum" id="2KR3"/>
<dbReference type="PDBsum" id="2KXD"/>
<dbReference type="PDBsum" id="2LJ3"/>
<dbReference type="PDBsum" id="2NUZ"/>
<dbReference type="PDBsum" id="2OAW"/>
<dbReference type="PDBsum" id="2RMO"/>
<dbReference type="PDBsum" id="2ROT"/>
<dbReference type="PDBsum" id="3I9Q"/>
<dbReference type="PDBsum" id="3M0P"/>
<dbReference type="PDBsum" id="3M0Q"/>
<dbReference type="PDBsum" id="3M0R"/>
<dbReference type="PDBsum" id="3M0S"/>
<dbReference type="PDBsum" id="3M0T"/>
<dbReference type="PDBsum" id="3M0U"/>
<dbReference type="PDBsum" id="3NGP"/>
<dbReference type="PDBsum" id="4F16"/>
<dbReference type="PDBsum" id="4F17"/>
<dbReference type="PDBsum" id="5IHI"/>
<dbReference type="PDBsum" id="5IHK"/>
<dbReference type="PDBsum" id="5IHN"/>
<dbReference type="PDBsum" id="5M6S"/>
<dbReference type="PDBsum" id="7S4R"/>
<dbReference type="PDBsum" id="8CF4"/>
<dbReference type="PDBsum" id="8CHG"/>
<dbReference type="PDBsum" id="8CHH"/>
<dbReference type="BMRB" id="P07751"/>
<dbReference type="SASBDB" id="P07751"/>
<dbReference type="SMR" id="P07751"/>
<dbReference type="FunCoup" id="P07751">
    <property type="interactions" value="2338"/>
</dbReference>
<dbReference type="MINT" id="P07751"/>
<dbReference type="STRING" id="9031.ENSGALP00000066200"/>
<dbReference type="PaxDb" id="9031-ENSGALP00000038979"/>
<dbReference type="GeneID" id="374234"/>
<dbReference type="KEGG" id="gga:374234"/>
<dbReference type="CTD" id="6709"/>
<dbReference type="VEuPathDB" id="HostDB:geneid_374234"/>
<dbReference type="eggNOG" id="KOG0040">
    <property type="taxonomic scope" value="Eukaryota"/>
</dbReference>
<dbReference type="InParanoid" id="P07751"/>
<dbReference type="OrthoDB" id="6018565at2759"/>
<dbReference type="PhylomeDB" id="P07751"/>
<dbReference type="EvolutionaryTrace" id="P07751"/>
<dbReference type="PRO" id="PR:P07751"/>
<dbReference type="Proteomes" id="UP000000539">
    <property type="component" value="Unassembled WGS sequence"/>
</dbReference>
<dbReference type="GO" id="GO:0030054">
    <property type="term" value="C:cell junction"/>
    <property type="evidence" value="ECO:0000318"/>
    <property type="project" value="GO_Central"/>
</dbReference>
<dbReference type="GO" id="GO:0042995">
    <property type="term" value="C:cell projection"/>
    <property type="evidence" value="ECO:0000318"/>
    <property type="project" value="GO_Central"/>
</dbReference>
<dbReference type="GO" id="GO:0030864">
    <property type="term" value="C:cortical actin cytoskeleton"/>
    <property type="evidence" value="ECO:0000318"/>
    <property type="project" value="GO_Central"/>
</dbReference>
<dbReference type="GO" id="GO:0043034">
    <property type="term" value="C:costamere"/>
    <property type="evidence" value="ECO:0000314"/>
    <property type="project" value="AgBase"/>
</dbReference>
<dbReference type="GO" id="GO:0005886">
    <property type="term" value="C:plasma membrane"/>
    <property type="evidence" value="ECO:0000318"/>
    <property type="project" value="GO_Central"/>
</dbReference>
<dbReference type="GO" id="GO:0051015">
    <property type="term" value="F:actin filament binding"/>
    <property type="evidence" value="ECO:0000318"/>
    <property type="project" value="GO_Central"/>
</dbReference>
<dbReference type="GO" id="GO:0005509">
    <property type="term" value="F:calcium ion binding"/>
    <property type="evidence" value="ECO:0007669"/>
    <property type="project" value="InterPro"/>
</dbReference>
<dbReference type="GO" id="GO:0005516">
    <property type="term" value="F:calmodulin binding"/>
    <property type="evidence" value="ECO:0007669"/>
    <property type="project" value="UniProtKB-KW"/>
</dbReference>
<dbReference type="GO" id="GO:0030036">
    <property type="term" value="P:actin cytoskeleton organization"/>
    <property type="evidence" value="ECO:0000318"/>
    <property type="project" value="GO_Central"/>
</dbReference>
<dbReference type="GO" id="GO:0051693">
    <property type="term" value="P:actin filament capping"/>
    <property type="evidence" value="ECO:0007669"/>
    <property type="project" value="UniProtKB-KW"/>
</dbReference>
<dbReference type="CDD" id="cd00051">
    <property type="entry name" value="EFh"/>
    <property type="match status" value="1"/>
</dbReference>
<dbReference type="CDD" id="cd11808">
    <property type="entry name" value="SH3_Alpha_Spectrin"/>
    <property type="match status" value="1"/>
</dbReference>
<dbReference type="CDD" id="cd00176">
    <property type="entry name" value="SPEC"/>
    <property type="match status" value="13"/>
</dbReference>
<dbReference type="FunFam" id="1.20.58.60:FF:000007">
    <property type="entry name" value="Spectrin alpha chain non-erythrocytic 1"/>
    <property type="match status" value="2"/>
</dbReference>
<dbReference type="FunFam" id="1.20.58.60:FF:000037">
    <property type="entry name" value="Spectrin alpha chain non-erythrocytic 1"/>
    <property type="match status" value="1"/>
</dbReference>
<dbReference type="FunFam" id="1.10.238.10:FF:000032">
    <property type="entry name" value="Spectrin alpha chain, non-erythrocytic 1"/>
    <property type="match status" value="1"/>
</dbReference>
<dbReference type="FunFam" id="1.20.5.170:FF:000014">
    <property type="entry name" value="Spectrin alpha chain, non-erythrocytic 1"/>
    <property type="match status" value="1"/>
</dbReference>
<dbReference type="FunFam" id="1.20.58.60:FF:000006">
    <property type="entry name" value="Spectrin alpha chain, non-erythrocytic 1"/>
    <property type="match status" value="3"/>
</dbReference>
<dbReference type="FunFam" id="1.20.58.60:FF:000013">
    <property type="entry name" value="Spectrin alpha chain, non-erythrocytic 1"/>
    <property type="match status" value="2"/>
</dbReference>
<dbReference type="FunFam" id="1.20.58.60:FF:000017">
    <property type="entry name" value="Spectrin alpha chain, non-erythrocytic 1"/>
    <property type="match status" value="1"/>
</dbReference>
<dbReference type="FunFam" id="1.20.58.60:FF:000020">
    <property type="entry name" value="Spectrin alpha chain, non-erythrocytic 1"/>
    <property type="match status" value="1"/>
</dbReference>
<dbReference type="FunFam" id="1.20.58.60:FF:000026">
    <property type="entry name" value="Spectrin alpha chain, non-erythrocytic 1"/>
    <property type="match status" value="2"/>
</dbReference>
<dbReference type="FunFam" id="1.20.58.60:FF:000035">
    <property type="entry name" value="Spectrin alpha chain, non-erythrocytic 1"/>
    <property type="match status" value="1"/>
</dbReference>
<dbReference type="FunFam" id="1.20.58.60:FF:000043">
    <property type="entry name" value="Spectrin alpha chain, non-erythrocytic 1"/>
    <property type="match status" value="1"/>
</dbReference>
<dbReference type="FunFam" id="1.20.58.60:FF:000046">
    <property type="entry name" value="Spectrin alpha chain, non-erythrocytic 1"/>
    <property type="match status" value="1"/>
</dbReference>
<dbReference type="FunFam" id="1.20.58.60:FF:000071">
    <property type="entry name" value="Spectrin alpha chain, non-erythrocytic 1"/>
    <property type="match status" value="1"/>
</dbReference>
<dbReference type="FunFam" id="1.20.58.60:FF:000078">
    <property type="entry name" value="Spectrin alpha chain, non-erythrocytic 1"/>
    <property type="match status" value="1"/>
</dbReference>
<dbReference type="FunFam" id="1.20.58.60:FF:000079">
    <property type="entry name" value="Spectrin alpha chain, non-erythrocytic 1"/>
    <property type="match status" value="1"/>
</dbReference>
<dbReference type="FunFam" id="1.20.58.60:FF:000080">
    <property type="entry name" value="Spectrin alpha chain, non-erythrocytic 1"/>
    <property type="match status" value="1"/>
</dbReference>
<dbReference type="FunFam" id="2.30.30.40:FF:000036">
    <property type="entry name" value="Spectrin alpha chain, non-erythrocytic 1"/>
    <property type="match status" value="1"/>
</dbReference>
<dbReference type="FunFam" id="1.10.238.10:FF:000020">
    <property type="entry name" value="spectrin alpha chain, non-erythrocytic 1"/>
    <property type="match status" value="1"/>
</dbReference>
<dbReference type="FunFam" id="1.20.58.60:FF:000100">
    <property type="entry name" value="spectrin alpha chain, non-erythrocytic 1 isoform X1"/>
    <property type="match status" value="1"/>
</dbReference>
<dbReference type="Gene3D" id="1.20.5.170">
    <property type="match status" value="1"/>
</dbReference>
<dbReference type="Gene3D" id="1.20.58.60">
    <property type="match status" value="20"/>
</dbReference>
<dbReference type="Gene3D" id="1.10.238.10">
    <property type="entry name" value="EF-hand"/>
    <property type="match status" value="2"/>
</dbReference>
<dbReference type="Gene3D" id="2.30.30.40">
    <property type="entry name" value="SH3 Domains"/>
    <property type="match status" value="1"/>
</dbReference>
<dbReference type="InterPro" id="IPR035825">
    <property type="entry name" value="Alpha_Spectrin_SH3"/>
</dbReference>
<dbReference type="InterPro" id="IPR011992">
    <property type="entry name" value="EF-hand-dom_pair"/>
</dbReference>
<dbReference type="InterPro" id="IPR014837">
    <property type="entry name" value="EF-hand_Ca_insen"/>
</dbReference>
<dbReference type="InterPro" id="IPR018247">
    <property type="entry name" value="EF_Hand_1_Ca_BS"/>
</dbReference>
<dbReference type="InterPro" id="IPR002048">
    <property type="entry name" value="EF_hand_dom"/>
</dbReference>
<dbReference type="InterPro" id="IPR036028">
    <property type="entry name" value="SH3-like_dom_sf"/>
</dbReference>
<dbReference type="InterPro" id="IPR001452">
    <property type="entry name" value="SH3_domain"/>
</dbReference>
<dbReference type="InterPro" id="IPR018159">
    <property type="entry name" value="Spectrin/alpha-actinin"/>
</dbReference>
<dbReference type="InterPro" id="IPR002017">
    <property type="entry name" value="Spectrin_repeat"/>
</dbReference>
<dbReference type="PANTHER" id="PTHR11915">
    <property type="entry name" value="SPECTRIN/FILAMIN RELATED CYTOSKELETAL PROTEIN"/>
    <property type="match status" value="1"/>
</dbReference>
<dbReference type="Pfam" id="PF13499">
    <property type="entry name" value="EF-hand_7"/>
    <property type="match status" value="1"/>
</dbReference>
<dbReference type="Pfam" id="PF08726">
    <property type="entry name" value="EFhand_Ca_insen"/>
    <property type="match status" value="1"/>
</dbReference>
<dbReference type="Pfam" id="PF00018">
    <property type="entry name" value="SH3_1"/>
    <property type="match status" value="1"/>
</dbReference>
<dbReference type="Pfam" id="PF00435">
    <property type="entry name" value="Spectrin"/>
    <property type="match status" value="20"/>
</dbReference>
<dbReference type="PRINTS" id="PR00452">
    <property type="entry name" value="SH3DOMAIN"/>
</dbReference>
<dbReference type="PRINTS" id="PR01887">
    <property type="entry name" value="SPECTRNALPHA"/>
</dbReference>
<dbReference type="SMART" id="SM00054">
    <property type="entry name" value="EFh"/>
    <property type="match status" value="2"/>
</dbReference>
<dbReference type="SMART" id="SM01184">
    <property type="entry name" value="efhand_Ca_insen"/>
    <property type="match status" value="1"/>
</dbReference>
<dbReference type="SMART" id="SM00326">
    <property type="entry name" value="SH3"/>
    <property type="match status" value="1"/>
</dbReference>
<dbReference type="SMART" id="SM00150">
    <property type="entry name" value="SPEC"/>
    <property type="match status" value="20"/>
</dbReference>
<dbReference type="SUPFAM" id="SSF47473">
    <property type="entry name" value="EF-hand"/>
    <property type="match status" value="1"/>
</dbReference>
<dbReference type="SUPFAM" id="SSF50044">
    <property type="entry name" value="SH3-domain"/>
    <property type="match status" value="1"/>
</dbReference>
<dbReference type="SUPFAM" id="SSF46966">
    <property type="entry name" value="Spectrin repeat"/>
    <property type="match status" value="16"/>
</dbReference>
<dbReference type="PROSITE" id="PS00018">
    <property type="entry name" value="EF_HAND_1"/>
    <property type="match status" value="2"/>
</dbReference>
<dbReference type="PROSITE" id="PS50222">
    <property type="entry name" value="EF_HAND_2"/>
    <property type="match status" value="3"/>
</dbReference>
<dbReference type="PROSITE" id="PS50002">
    <property type="entry name" value="SH3"/>
    <property type="match status" value="1"/>
</dbReference>
<evidence type="ECO:0000250" key="1"/>
<evidence type="ECO:0000255" key="2"/>
<evidence type="ECO:0000255" key="3">
    <source>
        <dbReference type="PROSITE-ProRule" id="PRU00192"/>
    </source>
</evidence>
<evidence type="ECO:0000255" key="4">
    <source>
        <dbReference type="PROSITE-ProRule" id="PRU00448"/>
    </source>
</evidence>
<evidence type="ECO:0000305" key="5"/>
<evidence type="ECO:0000305" key="6">
    <source>
    </source>
</evidence>
<evidence type="ECO:0000305" key="7">
    <source>
    </source>
</evidence>
<evidence type="ECO:0000305" key="8">
    <source>
    </source>
</evidence>
<evidence type="ECO:0007744" key="9">
    <source>
        <dbReference type="PDB" id="1U4Q"/>
    </source>
</evidence>
<evidence type="ECO:0007744" key="10">
    <source>
        <dbReference type="PDB" id="1U5P"/>
    </source>
</evidence>
<evidence type="ECO:0007744" key="11">
    <source>
        <dbReference type="PDB" id="3M0P"/>
    </source>
</evidence>
<evidence type="ECO:0007744" key="12">
    <source>
        <dbReference type="PDB" id="3M0Q"/>
    </source>
</evidence>
<evidence type="ECO:0007744" key="13">
    <source>
        <dbReference type="PDB" id="3M0R"/>
    </source>
</evidence>
<evidence type="ECO:0007744" key="14">
    <source>
        <dbReference type="PDB" id="3M0S"/>
    </source>
</evidence>
<evidence type="ECO:0007744" key="15">
    <source>
        <dbReference type="PDB" id="3M0T"/>
    </source>
</evidence>
<evidence type="ECO:0007744" key="16">
    <source>
        <dbReference type="PDB" id="3M0U"/>
    </source>
</evidence>
<evidence type="ECO:0007744" key="17">
    <source>
        <dbReference type="PDB" id="5M6S"/>
    </source>
</evidence>
<evidence type="ECO:0007829" key="18">
    <source>
        <dbReference type="PDB" id="1CUN"/>
    </source>
</evidence>
<evidence type="ECO:0007829" key="19">
    <source>
        <dbReference type="PDB" id="1G2B"/>
    </source>
</evidence>
<evidence type="ECO:0007829" key="20">
    <source>
        <dbReference type="PDB" id="1H8K"/>
    </source>
</evidence>
<evidence type="ECO:0007829" key="21">
    <source>
        <dbReference type="PDB" id="1TUC"/>
    </source>
</evidence>
<evidence type="ECO:0007829" key="22">
    <source>
        <dbReference type="PDB" id="1TUD"/>
    </source>
</evidence>
<evidence type="ECO:0007829" key="23">
    <source>
        <dbReference type="PDB" id="1U5P"/>
    </source>
</evidence>
<evidence type="ECO:0007829" key="24">
    <source>
        <dbReference type="PDB" id="3NGP"/>
    </source>
</evidence>
<comment type="function">
    <text>Morphologically, spectrin-like proteins appear to be related to spectrin, showing a flexible rod-like structure. They can bind actin but seem to differ in their calmodulin-binding activity. In nonerythroid tissues, spectrins, in association with some other proteins, may play an important role in membrane organization.</text>
</comment>
<comment type="subunit">
    <text evidence="1">Like erythrocyte spectrin, the spectrin-like proteins are capable of forming dimers which can further associate to tetramers. Interacts with ACP1 (By similarity).</text>
</comment>
<comment type="subcellular location">
    <subcellularLocation>
        <location>Cytoplasm</location>
        <location>Cytoskeleton</location>
    </subcellularLocation>
    <subcellularLocation>
        <location>Cytoplasm</location>
        <location>Cell cortex</location>
    </subcellularLocation>
</comment>
<comment type="PTM">
    <text evidence="1">Phosphorylation of Tyr-1176 decreases sensitivity to cleavage by calpain in vitro.</text>
</comment>
<comment type="similarity">
    <text evidence="5">Belongs to the spectrin family.</text>
</comment>
<sequence length="2477" mass="285363">MDPSGVKVLETAEDIQERRQQVLDRYHRFKELSSLRRQKLEDSYRFQFFQRDADELGKWIQEKLQIASDENYKDPSNLQGKLQKHQAFEAEVQANSGAIVKLDETGNQMINEGHFASETIRTRLQELHRLWELLLEKMREKGVKLLQAQKLVQFLRECEDVMDWINDKEAIVTSEELGQDLEHVEVLQKKFEEFQTDLAAHEERVNEVNQFAGKLIQEQHPEEELIKSKQDEVNASWQRLKGLAQQRQGKLFGAAEVQRFNRDVDETISWIKEKGQLMASDDFGRDLASVQALLRKHEGLERDLAAFHHKVKALCAEADRLQQSHPINASQIQVKREELIANWEQIRTLAAERHARLNDSYRLQRFLADFRDLTSWVTEMKALINADELANDVAGAEALLDRHQEHKGEIDAHEDSFRSADESGQALLAAGHYASDEVKEKLTILSDERSALLELWELRRQQYEQCMDLQLFYRDTEQVDNWMSKQEAFLLNEDLGDSLDSVEALLKKHEDFEKSLSAQEEKITALDEFATKLIQNNHYAMDDVATRRDALLSRRNALHERAMKRRAQLADSFHLQQFFRDSDELKSWVNEKMKTATDEAYKDPSNLQGKVQKHQAFEAELSANQSRIDALEKAGQKLIDVNHYASDEVAARMNEVISLWKKLLEATELKGIKLREANQQQQFNRNVEDIELWLYEVEGHLASDDYGKDLTSVQNLQKKHALLEADVAAHQDPIDGITIQARQFQDAGHFDADNIKKKQEALVARYEALKDPMVARKQKLADSLRLQQLFRDIEDEETWIREKEPIAASTNRGKDLIGVQNLLKKHQALQAEIAGHEPRIKAVTQKGNAMVEEGHFAAEDVKIKLNELNQKWDSLKAKASQRRQDLEDSLQAQQYFADANEAQSWMREKEPIVGSTDYGKDEDSAEALLKKHEALMSDLSAYGSSIQALREQAQSCRQQVAPTDDETGKELVLALYDYQEKSPREVTMKKGDILTLLNSTNKDWWKVEVNDRQGFVPAAYVKKLDPAQSASRENLLEEQGSIALRQEQIDNQTLITKEVGSVSLRMKQVEELYHSLLELGEKRKGMLEKSCKKFMLFREANELQQWINEKEAALTNEEVGADLEQVEVLQKKFDDFQKDLKANESRLKDINKVANDLESEGLMAEEVQAVEHQEVYGMMPRDETDSKTVSPWKSARMMVHTVATFNSIKELNERWRSLQQLAEERSQLLGSADEVQRFHRDADETKEWIEEKNQALNTDNYGHDLASVQALQRNDEGFERDLAALGDKVNSLGETAQRLIQSHPELAEDLQEKCTELNQAWSSLGKRADQRKEKLGDSHDLQRFLSDFRDLMSWINGIRGLVSSDELAKDVTGAEALLERHQEHRTEIDARAGTFQAFEQFGQQLLARGHYASPEIKEKLDILDQERTDLEKAWVQRRMMLDQCLELQLFHRDCEQAENWMAAREAFLNTEDKGDSLDSVEALIKKHEDFDKAINVQEEKIAVLQSFADQLIAADHYAKGVIANRRNEVLDRWRRLKAQMIEKRSKLGESQTLQQFSRDVDEIEAWISEKLQTASDESYKDPTNIQLSKLLSKHQKHQAFEAELHANADRIRGVIEMGNPLIERGACAGSEDAVKARLAALADQWEFLVQKSSEKSQKLKEANKQQNFNTGIKDFDFWLSEVEALLASEDYGKDLASVNNLLKKHQLLEADISAHEDRLKDLNSQADSLMTSSAFDTSQVKDKRETINGRFQRIKSMAAARRAKLNESHRLHQFFRDMDDEESWIKEKKLLVSSEDYGRDLTGVQNLRKKHKRLEAELAAHEPAIQGVLDTGKKLSDDNTIGKEEIQQRLAQFVDHWKELKQLAAARGQRLEESLEYQQFVANVEEEEAWINEKMTLVASEDYGDTLAAIQGLLKKHEAFETDFTVHKDRVNDVCANGEDLIKKNNHHVENITAKMKGLKGKVSDLEKAAAQRKAKLDENSAFLQFNWKADVVESWIGEKENSLKTDDYGRDLSSVQTLLTKQETFDAGLQAFQQEGIANITALKDQLLAAKHIQSKAIEVRHASLMKRWNQLLANSAARKKKLLEAQEHFRKVEDLFLTFAKKASAFNSWFENAEEDLTDPVRCNSLEEIKALREAHDAFRSSLSSAQADFNQLAELDRQIKSFRVASNPYTWFTMEALEETWRNLQKIIKERELELQKEQRRQEENDKLRQEFAQHANAFHQWIQETRTYLLDGSCMVEESGTLESQLEATKRKHQEIRAMRSQLKKIEDLGAAMEEALILDNKYTEHSTVGLAQQWDQLDQLGMRMQHNLEQQIQARNTTGVTEEALKEFSMMFKHFDKDKSGRLNHQEFKSCLRSLGYDLPMVEEGEPDPEFESILDTVDPNRDGHVSLQEYMAFMISRETENVKSSEEIESAFRALSSERKPYVTKEELYQNLTREQADYCISHMKPYMDGKGRELPSAYDYIEFTRSLFVN</sequence>
<protein>
    <recommendedName>
        <fullName>Spectrin alpha chain, non-erythrocytic 1</fullName>
    </recommendedName>
    <alternativeName>
        <fullName>Alpha-II spectrin</fullName>
    </alternativeName>
    <alternativeName>
        <fullName>Fodrin alpha chain</fullName>
    </alternativeName>
</protein>